<name>AEN_PONAB</name>
<accession>Q5REE2</accession>
<keyword id="KW-0053">Apoptosis</keyword>
<keyword id="KW-0227">DNA damage</keyword>
<keyword id="KW-0269">Exonuclease</keyword>
<keyword id="KW-0378">Hydrolase</keyword>
<keyword id="KW-0540">Nuclease</keyword>
<keyword id="KW-0539">Nucleus</keyword>
<keyword id="KW-1185">Reference proteome</keyword>
<reference key="1">
    <citation type="submission" date="2004-11" db="EMBL/GenBank/DDBJ databases">
        <authorList>
            <consortium name="The German cDNA consortium"/>
        </authorList>
    </citation>
    <scope>NUCLEOTIDE SEQUENCE [LARGE SCALE MRNA]</scope>
    <source>
        <tissue>Kidney</tissue>
    </source>
</reference>
<sequence length="325" mass="36408">MVPREAPESAQCLCPSLTIPNAKDVLRKRHKRRSRQHQRFMARKALLQEQGLLSMPPEPGSSPLPTPFGAVTATEDASSGKQCPRAGSGGAPCSRRPAPGKASGPLPSKCVAIDCEMVGTGPRGRVSELARCSIVSYHGDVLYDKYIRPEMPIVDYRTRWSGITRQHMCKAIPFQVAQKEILKLLKGKVVVGHALHNDFQALKYVHPRSQTRDTTYVPNFLSEPSLHIRARVSLKDLALQLLHKKIQVGQHGHSSVEDATTAMELYRLVEVQWEQQEARSLWTCPEDREPDSSTDMEQYMEDQYWPDDLAHGSRGGAREAQDRRN</sequence>
<feature type="chain" id="PRO_0000324090" description="Apoptosis-enhancing nuclease">
    <location>
        <begin position="1"/>
        <end position="325"/>
    </location>
</feature>
<feature type="domain" description="Exonuclease">
    <location>
        <begin position="110"/>
        <end position="266"/>
    </location>
</feature>
<feature type="region of interest" description="Disordered" evidence="2">
    <location>
        <begin position="53"/>
        <end position="105"/>
    </location>
</feature>
<feature type="region of interest" description="Disordered" evidence="2">
    <location>
        <begin position="281"/>
        <end position="325"/>
    </location>
</feature>
<feature type="short sequence motif" description="Nucleolar localization signal" evidence="1">
    <location>
        <begin position="27"/>
        <end position="35"/>
    </location>
</feature>
<feature type="short sequence motif" description="Nuclear localization signal" evidence="1">
    <location>
        <begin position="165"/>
        <end position="188"/>
    </location>
</feature>
<feature type="compositionally biased region" description="Pro residues" evidence="2">
    <location>
        <begin position="56"/>
        <end position="66"/>
    </location>
</feature>
<feature type="compositionally biased region" description="Basic and acidic residues" evidence="2">
    <location>
        <begin position="308"/>
        <end position="325"/>
    </location>
</feature>
<evidence type="ECO:0000250" key="1"/>
<evidence type="ECO:0000256" key="2">
    <source>
        <dbReference type="SAM" id="MobiDB-lite"/>
    </source>
</evidence>
<protein>
    <recommendedName>
        <fullName>Apoptosis-enhancing nuclease</fullName>
        <ecNumber>3.1.-.-</ecNumber>
    </recommendedName>
    <alternativeName>
        <fullName>Interferon-stimulated 20 kDa exonuclease-like 1</fullName>
    </alternativeName>
</protein>
<organism>
    <name type="scientific">Pongo abelii</name>
    <name type="common">Sumatran orangutan</name>
    <name type="synonym">Pongo pygmaeus abelii</name>
    <dbReference type="NCBI Taxonomy" id="9601"/>
    <lineage>
        <taxon>Eukaryota</taxon>
        <taxon>Metazoa</taxon>
        <taxon>Chordata</taxon>
        <taxon>Craniata</taxon>
        <taxon>Vertebrata</taxon>
        <taxon>Euteleostomi</taxon>
        <taxon>Mammalia</taxon>
        <taxon>Eutheria</taxon>
        <taxon>Euarchontoglires</taxon>
        <taxon>Primates</taxon>
        <taxon>Haplorrhini</taxon>
        <taxon>Catarrhini</taxon>
        <taxon>Hominidae</taxon>
        <taxon>Pongo</taxon>
    </lineage>
</organism>
<comment type="function">
    <text evidence="1">Exonuclease with activity against single- and double-stranded DNA and RNA. Mediates p53-induced apoptosis. When induced by p53 following DNA damage, digests double-stranded DNA to form single-stranded DNA and amplifies DNA damage signals, leading to enhancement of apoptosis (By similarity).</text>
</comment>
<comment type="subcellular location">
    <subcellularLocation>
        <location evidence="1">Nucleus</location>
    </subcellularLocation>
    <subcellularLocation>
        <location evidence="1">Nucleus</location>
        <location evidence="1">Nucleolus</location>
    </subcellularLocation>
    <text evidence="1">Localized predomintly in the nucleolus. Translocates from the nucleolus to the nucleoplasm upon apoptosis induction (By similarity).</text>
</comment>
<dbReference type="EC" id="3.1.-.-"/>
<dbReference type="EMBL" id="CR857587">
    <property type="protein sequence ID" value="CAH89865.1"/>
    <property type="molecule type" value="mRNA"/>
</dbReference>
<dbReference type="RefSeq" id="NP_001124869.1">
    <property type="nucleotide sequence ID" value="NM_001131397.1"/>
</dbReference>
<dbReference type="SMR" id="Q5REE2"/>
<dbReference type="FunCoup" id="Q5REE2">
    <property type="interactions" value="2381"/>
</dbReference>
<dbReference type="STRING" id="9601.ENSPPYP00000007664"/>
<dbReference type="GeneID" id="100171731"/>
<dbReference type="KEGG" id="pon:100171731"/>
<dbReference type="CTD" id="64782"/>
<dbReference type="eggNOG" id="KOG2249">
    <property type="taxonomic scope" value="Eukaryota"/>
</dbReference>
<dbReference type="InParanoid" id="Q5REE2"/>
<dbReference type="OrthoDB" id="16516at2759"/>
<dbReference type="Proteomes" id="UP000001595">
    <property type="component" value="Unplaced"/>
</dbReference>
<dbReference type="GO" id="GO:0005730">
    <property type="term" value="C:nucleolus"/>
    <property type="evidence" value="ECO:0000250"/>
    <property type="project" value="UniProtKB"/>
</dbReference>
<dbReference type="GO" id="GO:0005654">
    <property type="term" value="C:nucleoplasm"/>
    <property type="evidence" value="ECO:0000250"/>
    <property type="project" value="UniProtKB"/>
</dbReference>
<dbReference type="GO" id="GO:0004527">
    <property type="term" value="F:exonuclease activity"/>
    <property type="evidence" value="ECO:0000250"/>
    <property type="project" value="UniProtKB"/>
</dbReference>
<dbReference type="GO" id="GO:0003676">
    <property type="term" value="F:nucleic acid binding"/>
    <property type="evidence" value="ECO:0007669"/>
    <property type="project" value="InterPro"/>
</dbReference>
<dbReference type="GO" id="GO:0042771">
    <property type="term" value="P:intrinsic apoptotic signaling pathway in response to DNA damage by p53 class mediator"/>
    <property type="evidence" value="ECO:0000250"/>
    <property type="project" value="UniProtKB"/>
</dbReference>
<dbReference type="GO" id="GO:0010212">
    <property type="term" value="P:response to ionizing radiation"/>
    <property type="evidence" value="ECO:0000250"/>
    <property type="project" value="UniProtKB"/>
</dbReference>
<dbReference type="FunFam" id="3.30.420.10:FF:000007">
    <property type="entry name" value="Interferon-stimulated exonuclease gene 20"/>
    <property type="match status" value="1"/>
</dbReference>
<dbReference type="Gene3D" id="3.30.420.10">
    <property type="entry name" value="Ribonuclease H-like superfamily/Ribonuclease H"/>
    <property type="match status" value="1"/>
</dbReference>
<dbReference type="InterPro" id="IPR013520">
    <property type="entry name" value="Exonuclease_RNaseT/DNA_pol3"/>
</dbReference>
<dbReference type="InterPro" id="IPR047021">
    <property type="entry name" value="REXO1/3/4-like"/>
</dbReference>
<dbReference type="InterPro" id="IPR012337">
    <property type="entry name" value="RNaseH-like_sf"/>
</dbReference>
<dbReference type="InterPro" id="IPR036397">
    <property type="entry name" value="RNaseH_sf"/>
</dbReference>
<dbReference type="PANTHER" id="PTHR12801:SF57">
    <property type="entry name" value="APOPTOSIS-ENHANCING NUCLEASE"/>
    <property type="match status" value="1"/>
</dbReference>
<dbReference type="PANTHER" id="PTHR12801">
    <property type="entry name" value="RNA EXONUCLEASE REXO1 / RECO3 FAMILY MEMBER-RELATED"/>
    <property type="match status" value="1"/>
</dbReference>
<dbReference type="Pfam" id="PF00929">
    <property type="entry name" value="RNase_T"/>
    <property type="match status" value="1"/>
</dbReference>
<dbReference type="SMART" id="SM00479">
    <property type="entry name" value="EXOIII"/>
    <property type="match status" value="1"/>
</dbReference>
<dbReference type="SUPFAM" id="SSF53098">
    <property type="entry name" value="Ribonuclease H-like"/>
    <property type="match status" value="1"/>
</dbReference>
<gene>
    <name type="primary">AEN</name>
    <name type="synonym">ISG20L1</name>
</gene>
<proteinExistence type="evidence at transcript level"/>